<comment type="function">
    <text>The epsilon chain is a beta-type chain of early mammalian embryonic hemoglobin.</text>
</comment>
<comment type="subunit">
    <text>Heterotetramer of two alpha chains and two epsilon chains in early embryonic hemoglobin Gower-2; two zeta chains and two epsilon chains in early embryonic hemoglobin Gower-1.</text>
</comment>
<comment type="tissue specificity">
    <text>Red blood cells.</text>
</comment>
<comment type="similarity">
    <text evidence="2">Belongs to the globin family.</text>
</comment>
<dbReference type="EMBL" id="M81363">
    <property type="protein sequence ID" value="AAA70223.1"/>
    <property type="molecule type" value="Genomic_DNA"/>
</dbReference>
<dbReference type="RefSeq" id="XP_004050587.1">
    <property type="nucleotide sequence ID" value="XM_004050539.4"/>
</dbReference>
<dbReference type="SMR" id="Q6LDH0"/>
<dbReference type="FunCoup" id="Q6LDH0">
    <property type="interactions" value="17"/>
</dbReference>
<dbReference type="STRING" id="9593.ENSGGOP00000026114"/>
<dbReference type="Ensembl" id="ENSGGOT00000031529.2">
    <property type="protein sequence ID" value="ENSGGOP00000026114.2"/>
    <property type="gene ID" value="ENSGGOG00000024137.2"/>
</dbReference>
<dbReference type="GeneID" id="101151732"/>
<dbReference type="KEGG" id="ggo:101151732"/>
<dbReference type="CTD" id="3046"/>
<dbReference type="eggNOG" id="KOG3378">
    <property type="taxonomic scope" value="Eukaryota"/>
</dbReference>
<dbReference type="GeneTree" id="ENSGT00940000157809"/>
<dbReference type="HOGENOM" id="CLU_003827_10_0_1"/>
<dbReference type="InParanoid" id="Q6LDH0"/>
<dbReference type="OMA" id="ICGNPQV"/>
<dbReference type="OrthoDB" id="1667at9604"/>
<dbReference type="Proteomes" id="UP000001519">
    <property type="component" value="Chromosome 11"/>
</dbReference>
<dbReference type="Bgee" id="ENSGGOG00000024137">
    <property type="expression patterns" value="Expressed in liver and 2 other cell types or tissues"/>
</dbReference>
<dbReference type="GO" id="GO:0031838">
    <property type="term" value="C:haptoglobin-hemoglobin complex"/>
    <property type="evidence" value="ECO:0000318"/>
    <property type="project" value="GO_Central"/>
</dbReference>
<dbReference type="GO" id="GO:0005833">
    <property type="term" value="C:hemoglobin complex"/>
    <property type="evidence" value="ECO:0000318"/>
    <property type="project" value="GO_Central"/>
</dbReference>
<dbReference type="GO" id="GO:0020037">
    <property type="term" value="F:heme binding"/>
    <property type="evidence" value="ECO:0000318"/>
    <property type="project" value="GO_Central"/>
</dbReference>
<dbReference type="GO" id="GO:0031721">
    <property type="term" value="F:hemoglobin alpha binding"/>
    <property type="evidence" value="ECO:0000318"/>
    <property type="project" value="GO_Central"/>
</dbReference>
<dbReference type="GO" id="GO:0046872">
    <property type="term" value="F:metal ion binding"/>
    <property type="evidence" value="ECO:0007669"/>
    <property type="project" value="UniProtKB-KW"/>
</dbReference>
<dbReference type="GO" id="GO:0019825">
    <property type="term" value="F:oxygen binding"/>
    <property type="evidence" value="ECO:0000318"/>
    <property type="project" value="GO_Central"/>
</dbReference>
<dbReference type="GO" id="GO:0005344">
    <property type="term" value="F:oxygen carrier activity"/>
    <property type="evidence" value="ECO:0000318"/>
    <property type="project" value="GO_Central"/>
</dbReference>
<dbReference type="GO" id="GO:0098869">
    <property type="term" value="P:cellular oxidant detoxification"/>
    <property type="evidence" value="ECO:0007669"/>
    <property type="project" value="GOC"/>
</dbReference>
<dbReference type="GO" id="GO:0042744">
    <property type="term" value="P:hydrogen peroxide catabolic process"/>
    <property type="evidence" value="ECO:0000318"/>
    <property type="project" value="GO_Central"/>
</dbReference>
<dbReference type="CDD" id="cd08925">
    <property type="entry name" value="Hb-beta-like"/>
    <property type="match status" value="1"/>
</dbReference>
<dbReference type="FunFam" id="1.10.490.10:FF:000001">
    <property type="entry name" value="Hemoglobin subunit beta"/>
    <property type="match status" value="1"/>
</dbReference>
<dbReference type="Gene3D" id="1.10.490.10">
    <property type="entry name" value="Globins"/>
    <property type="match status" value="1"/>
</dbReference>
<dbReference type="InterPro" id="IPR000971">
    <property type="entry name" value="Globin"/>
</dbReference>
<dbReference type="InterPro" id="IPR009050">
    <property type="entry name" value="Globin-like_sf"/>
</dbReference>
<dbReference type="InterPro" id="IPR012292">
    <property type="entry name" value="Globin/Proto"/>
</dbReference>
<dbReference type="InterPro" id="IPR002337">
    <property type="entry name" value="Hemoglobin_b"/>
</dbReference>
<dbReference type="InterPro" id="IPR050056">
    <property type="entry name" value="Hemoglobin_oxygen_transport"/>
</dbReference>
<dbReference type="PANTHER" id="PTHR11442">
    <property type="entry name" value="HEMOGLOBIN FAMILY MEMBER"/>
    <property type="match status" value="1"/>
</dbReference>
<dbReference type="PANTHER" id="PTHR11442:SF7">
    <property type="entry name" value="HEMOGLOBIN SUBUNIT EPSILON"/>
    <property type="match status" value="1"/>
</dbReference>
<dbReference type="Pfam" id="PF00042">
    <property type="entry name" value="Globin"/>
    <property type="match status" value="1"/>
</dbReference>
<dbReference type="PRINTS" id="PR00814">
    <property type="entry name" value="BETAHAEM"/>
</dbReference>
<dbReference type="SUPFAM" id="SSF46458">
    <property type="entry name" value="Globin-like"/>
    <property type="match status" value="1"/>
</dbReference>
<dbReference type="PROSITE" id="PS01033">
    <property type="entry name" value="GLOBIN"/>
    <property type="match status" value="1"/>
</dbReference>
<feature type="chain" id="PRO_0000053211" description="Hemoglobin subunit epsilon">
    <location>
        <begin position="1"/>
        <end position="147"/>
    </location>
</feature>
<feature type="domain" description="Globin" evidence="2">
    <location>
        <begin position="3"/>
        <end position="147"/>
    </location>
</feature>
<feature type="binding site" description="distal binding residue" evidence="2">
    <location>
        <position position="64"/>
    </location>
    <ligand>
        <name>heme b</name>
        <dbReference type="ChEBI" id="CHEBI:60344"/>
    </ligand>
    <ligandPart>
        <name>Fe</name>
        <dbReference type="ChEBI" id="CHEBI:18248"/>
    </ligandPart>
</feature>
<feature type="binding site" description="proximal binding residue" evidence="2">
    <location>
        <position position="93"/>
    </location>
    <ligand>
        <name>heme b</name>
        <dbReference type="ChEBI" id="CHEBI:60344"/>
    </ligand>
    <ligandPart>
        <name>Fe</name>
        <dbReference type="ChEBI" id="CHEBI:18248"/>
    </ligandPart>
</feature>
<feature type="modified residue" description="Phosphoserine" evidence="1">
    <location>
        <position position="14"/>
    </location>
</feature>
<feature type="modified residue" description="Phosphoserine" evidence="1">
    <location>
        <position position="51"/>
    </location>
</feature>
<name>HBE_GORGO</name>
<sequence>MVHFTAEEKAAVTSLWSKMNVEEAGGEALGRLLVVYPWTQRFFDSFGNLSSPSAILGNPKVKAHGKKVLTSFGDAIKNMDNLKPAFAKLSELHCDKLHVDPENFKLLGNVMVIILATHFGKEFTPEVQAAWQKLVSAVAIALAHKYH</sequence>
<proteinExistence type="evidence at transcript level"/>
<organism>
    <name type="scientific">Gorilla gorilla gorilla</name>
    <name type="common">Western lowland gorilla</name>
    <dbReference type="NCBI Taxonomy" id="9595"/>
    <lineage>
        <taxon>Eukaryota</taxon>
        <taxon>Metazoa</taxon>
        <taxon>Chordata</taxon>
        <taxon>Craniata</taxon>
        <taxon>Vertebrata</taxon>
        <taxon>Euteleostomi</taxon>
        <taxon>Mammalia</taxon>
        <taxon>Eutheria</taxon>
        <taxon>Euarchontoglires</taxon>
        <taxon>Primates</taxon>
        <taxon>Haplorrhini</taxon>
        <taxon>Catarrhini</taxon>
        <taxon>Hominidae</taxon>
        <taxon>Gorilla</taxon>
    </lineage>
</organism>
<gene>
    <name type="primary">HBE1</name>
</gene>
<protein>
    <recommendedName>
        <fullName>Hemoglobin subunit epsilon</fullName>
    </recommendedName>
    <alternativeName>
        <fullName>Epsilon-globin</fullName>
    </alternativeName>
    <alternativeName>
        <fullName>Hemoglobin epsilon chain</fullName>
    </alternativeName>
</protein>
<keyword id="KW-0349">Heme</keyword>
<keyword id="KW-0408">Iron</keyword>
<keyword id="KW-0479">Metal-binding</keyword>
<keyword id="KW-0561">Oxygen transport</keyword>
<keyword id="KW-0597">Phosphoprotein</keyword>
<keyword id="KW-1185">Reference proteome</keyword>
<keyword id="KW-0813">Transport</keyword>
<reference key="1">
    <citation type="journal article" date="1992" name="Science">
        <title>Rejection of the 'flying primate' hypothesis by phylogenetic evidence from the epsilon-globin gene.</title>
        <authorList>
            <person name="Bailey W.J."/>
            <person name="Slightom J.L."/>
            <person name="Goodman M."/>
        </authorList>
    </citation>
    <scope>NUCLEOTIDE SEQUENCE [GENOMIC DNA]</scope>
    <source>
        <tissue>Liver</tissue>
    </source>
</reference>
<reference key="2">
    <citation type="journal article" date="1993" name="Science">
        <authorList>
            <person name="Bailey W.J."/>
            <person name="Slightom J.L."/>
            <person name="Goodman M."/>
        </authorList>
    </citation>
    <scope>ERRATUM OF PUBMED:1301735</scope>
</reference>
<evidence type="ECO:0000250" key="1">
    <source>
        <dbReference type="UniProtKB" id="P02100"/>
    </source>
</evidence>
<evidence type="ECO:0000255" key="2">
    <source>
        <dbReference type="PROSITE-ProRule" id="PRU00238"/>
    </source>
</evidence>
<accession>Q6LDH0</accession>